<feature type="chain" id="PRO_0000435031" description="Arrestin domain-containing protein 4">
    <location>
        <begin position="1"/>
        <end position="415"/>
    </location>
</feature>
<feature type="short sequence motif" description="PPxY motif 1" evidence="4">
    <location>
        <begin position="347"/>
        <end position="350"/>
    </location>
</feature>
<feature type="short sequence motif" description="PPxY motif 2" evidence="4">
    <location>
        <begin position="392"/>
        <end position="395"/>
    </location>
</feature>
<feature type="splice variant" id="VSP_058000" description="In isoform 2.">
    <original>YIHI</original>
    <variation>IQAS</variation>
    <location>
        <begin position="293"/>
        <end position="296"/>
    </location>
</feature>
<feature type="splice variant" id="VSP_058001" description="In isoform 2.">
    <location>
        <begin position="297"/>
        <end position="415"/>
    </location>
</feature>
<feature type="mutagenesis site" description="Loss of localization to the cell membrane." evidence="3">
    <original>F</original>
    <variation>L</variation>
    <location>
        <position position="115"/>
    </location>
</feature>
<reference evidence="7" key="1">
    <citation type="journal article" date="2009" name="PLoS Biol.">
        <title>Lineage-specific biology revealed by a finished genome assembly of the mouse.</title>
        <authorList>
            <person name="Church D.M."/>
            <person name="Goodstadt L."/>
            <person name="Hillier L.W."/>
            <person name="Zody M.C."/>
            <person name="Goldstein S."/>
            <person name="She X."/>
            <person name="Bult C.J."/>
            <person name="Agarwala R."/>
            <person name="Cherry J.L."/>
            <person name="DiCuccio M."/>
            <person name="Hlavina W."/>
            <person name="Kapustin Y."/>
            <person name="Meric P."/>
            <person name="Maglott D."/>
            <person name="Birtle Z."/>
            <person name="Marques A.C."/>
            <person name="Graves T."/>
            <person name="Zhou S."/>
            <person name="Teague B."/>
            <person name="Potamousis K."/>
            <person name="Churas C."/>
            <person name="Place M."/>
            <person name="Herschleb J."/>
            <person name="Runnheim R."/>
            <person name="Forrest D."/>
            <person name="Amos-Landgraf J."/>
            <person name="Schwartz D.C."/>
            <person name="Cheng Z."/>
            <person name="Lindblad-Toh K."/>
            <person name="Eichler E.E."/>
            <person name="Ponting C.P."/>
        </authorList>
    </citation>
    <scope>NUCLEOTIDE SEQUENCE [LARGE SCALE GENOMIC DNA]</scope>
    <source>
        <strain evidence="7">C57BL/6J</strain>
    </source>
</reference>
<reference key="2">
    <citation type="submission" date="2005-09" db="EMBL/GenBank/DDBJ databases">
        <authorList>
            <person name="Mural R.J."/>
            <person name="Adams M.D."/>
            <person name="Myers E.W."/>
            <person name="Smith H.O."/>
            <person name="Venter J.C."/>
        </authorList>
    </citation>
    <scope>NUCLEOTIDE SEQUENCE [LARGE SCALE GENOMIC DNA]</scope>
</reference>
<reference key="3">
    <citation type="journal article" date="2004" name="Genome Res.">
        <title>The status, quality, and expansion of the NIH full-length cDNA project: the Mammalian Gene Collection (MGC).</title>
        <authorList>
            <consortium name="The MGC Project Team"/>
        </authorList>
    </citation>
    <scope>NUCLEOTIDE SEQUENCE [LARGE SCALE MRNA] (ISOFORM 2)</scope>
    <scope>IDENTIFICATION</scope>
    <source>
        <strain evidence="5">FVB/N</strain>
        <tissue evidence="5">Salivary gland</tissue>
    </source>
</reference>
<reference key="4">
    <citation type="journal article" date="2009" name="J. Biol. Chem.">
        <title>Thioredoxin-independent regulation of metabolism by the alpha-arrestin proteins.</title>
        <authorList>
            <person name="Patwari P."/>
            <person name="Chutkow W.A."/>
            <person name="Cummings K."/>
            <person name="Verstraeten V.L."/>
            <person name="Lammerding J."/>
            <person name="Schreiter E.R."/>
            <person name="Lee R.T."/>
        </authorList>
    </citation>
    <scope>SUBCELLULAR LOCATION</scope>
</reference>
<reference key="5">
    <citation type="journal article" date="2016" name="Cell Discov.">
        <title>Regulation of the divalent metal ion transporter via membrane budding.</title>
        <authorList>
            <person name="Mackenzie K."/>
            <person name="Foot N.J."/>
            <person name="Anand S."/>
            <person name="Dalton H.E."/>
            <person name="Chaudhary N."/>
            <person name="Collins B.M."/>
            <person name="Mathivanan S."/>
            <person name="Kumar S."/>
        </authorList>
    </citation>
    <scope>FUNCTION</scope>
    <scope>INTERACTION WITH SLC11A2</scope>
    <scope>SUBCELLULAR LOCATION</scope>
    <scope>INDUCTION</scope>
    <scope>MUTAGENESIS OF PHE-115</scope>
</reference>
<evidence type="ECO:0000250" key="1">
    <source>
        <dbReference type="UniProtKB" id="Q8NCT1"/>
    </source>
</evidence>
<evidence type="ECO:0000269" key="2">
    <source>
    </source>
</evidence>
<evidence type="ECO:0000269" key="3">
    <source>
    </source>
</evidence>
<evidence type="ECO:0000305" key="4"/>
<evidence type="ECO:0000312" key="5">
    <source>
        <dbReference type="EMBL" id="AAH17528.1"/>
    </source>
</evidence>
<evidence type="ECO:0000312" key="6">
    <source>
        <dbReference type="EMBL" id="EDL07161.1"/>
    </source>
</evidence>
<evidence type="ECO:0000312" key="7">
    <source>
        <dbReference type="Proteomes" id="UP000000589"/>
    </source>
</evidence>
<name>ARRD4_MOUSE</name>
<keyword id="KW-0025">Alternative splicing</keyword>
<keyword id="KW-1003">Cell membrane</keyword>
<keyword id="KW-0968">Cytoplasmic vesicle</keyword>
<keyword id="KW-0967">Endosome</keyword>
<keyword id="KW-0472">Membrane</keyword>
<keyword id="KW-1185">Reference proteome</keyword>
<keyword id="KW-0677">Repeat</keyword>
<gene>
    <name evidence="6" type="primary">Arrdc4</name>
</gene>
<accession>A0A0B4J1F4</accession>
<accession>Q8VD69</accession>
<organism>
    <name type="scientific">Mus musculus</name>
    <name type="common">Mouse</name>
    <dbReference type="NCBI Taxonomy" id="10090"/>
    <lineage>
        <taxon>Eukaryota</taxon>
        <taxon>Metazoa</taxon>
        <taxon>Chordata</taxon>
        <taxon>Craniata</taxon>
        <taxon>Vertebrata</taxon>
        <taxon>Euteleostomi</taxon>
        <taxon>Mammalia</taxon>
        <taxon>Eutheria</taxon>
        <taxon>Euarchontoglires</taxon>
        <taxon>Glires</taxon>
        <taxon>Rodentia</taxon>
        <taxon>Myomorpha</taxon>
        <taxon>Muroidea</taxon>
        <taxon>Muridae</taxon>
        <taxon>Murinae</taxon>
        <taxon>Mus</taxon>
        <taxon>Mus</taxon>
    </lineage>
</organism>
<protein>
    <recommendedName>
        <fullName>Arrestin domain-containing protein 4</fullName>
    </recommendedName>
</protein>
<dbReference type="EMBL" id="AC101933">
    <property type="status" value="NOT_ANNOTATED_CDS"/>
    <property type="molecule type" value="Genomic_DNA"/>
</dbReference>
<dbReference type="EMBL" id="CH466543">
    <property type="protein sequence ID" value="EDL07161.1"/>
    <property type="molecule type" value="Genomic_DNA"/>
</dbReference>
<dbReference type="EMBL" id="BC017528">
    <property type="protein sequence ID" value="AAH17528.1"/>
    <property type="molecule type" value="mRNA"/>
</dbReference>
<dbReference type="CCDS" id="CCDS39985.1">
    <molecule id="A0A0B4J1F4-1"/>
</dbReference>
<dbReference type="CCDS" id="CCDS52272.1">
    <molecule id="A0A0B4J1F4-2"/>
</dbReference>
<dbReference type="RefSeq" id="NP_001036057.1">
    <molecule id="A0A0B4J1F4-1"/>
    <property type="nucleotide sequence ID" value="NM_001042592.2"/>
</dbReference>
<dbReference type="RefSeq" id="NP_079825.2">
    <molecule id="A0A0B4J1F4-2"/>
    <property type="nucleotide sequence ID" value="NM_025549.3"/>
</dbReference>
<dbReference type="SMR" id="A0A0B4J1F4"/>
<dbReference type="FunCoup" id="A0A0B4J1F4">
    <property type="interactions" value="834"/>
</dbReference>
<dbReference type="IntAct" id="A0A0B4J1F4">
    <property type="interactions" value="1"/>
</dbReference>
<dbReference type="STRING" id="10090.ENSMUSP00000044578"/>
<dbReference type="PhosphoSitePlus" id="A0A0B4J1F4"/>
<dbReference type="jPOST" id="A0A0B4J1F4"/>
<dbReference type="PaxDb" id="10090-ENSMUSP00000044578"/>
<dbReference type="ProteomicsDB" id="281838">
    <molecule id="A0A0B4J1F4-1"/>
</dbReference>
<dbReference type="ProteomicsDB" id="281839">
    <molecule id="A0A0B4J1F4-2"/>
</dbReference>
<dbReference type="Antibodypedia" id="51203">
    <property type="antibodies" value="121 antibodies from 22 providers"/>
</dbReference>
<dbReference type="Ensembl" id="ENSMUST00000048068.15">
    <molecule id="A0A0B4J1F4-1"/>
    <property type="protein sequence ID" value="ENSMUSP00000044578.8"/>
    <property type="gene ID" value="ENSMUSG00000042659.16"/>
</dbReference>
<dbReference type="Ensembl" id="ENSMUST00000118110.3">
    <molecule id="A0A0B4J1F4-2"/>
    <property type="protein sequence ID" value="ENSMUSP00000112962.2"/>
    <property type="gene ID" value="ENSMUSG00000042659.16"/>
</dbReference>
<dbReference type="GeneID" id="66412"/>
<dbReference type="KEGG" id="mmu:66412"/>
<dbReference type="UCSC" id="uc009hji.1">
    <property type="organism name" value="mouse"/>
</dbReference>
<dbReference type="AGR" id="MGI:1913662"/>
<dbReference type="CTD" id="91947"/>
<dbReference type="MGI" id="MGI:1913662">
    <property type="gene designation" value="Arrdc4"/>
</dbReference>
<dbReference type="VEuPathDB" id="HostDB:ENSMUSG00000042659"/>
<dbReference type="eggNOG" id="KOG3780">
    <property type="taxonomic scope" value="Eukaryota"/>
</dbReference>
<dbReference type="GeneTree" id="ENSGT00940000160523"/>
<dbReference type="HOGENOM" id="CLU_039221_1_1_1"/>
<dbReference type="InParanoid" id="A0A0B4J1F4"/>
<dbReference type="OMA" id="RQTQDKM"/>
<dbReference type="OrthoDB" id="2333384at2759"/>
<dbReference type="PhylomeDB" id="A0A0B4J1F4"/>
<dbReference type="BioGRID-ORCS" id="66412">
    <property type="hits" value="2 hits in 77 CRISPR screens"/>
</dbReference>
<dbReference type="ChiTaRS" id="Arrdc4">
    <property type="organism name" value="mouse"/>
</dbReference>
<dbReference type="PRO" id="PR:A0A0B4J1F4"/>
<dbReference type="Proteomes" id="UP000000589">
    <property type="component" value="Chromosome 7"/>
</dbReference>
<dbReference type="RNAct" id="A0A0B4J1F4">
    <property type="molecule type" value="protein"/>
</dbReference>
<dbReference type="Bgee" id="ENSMUSG00000042659">
    <property type="expression patterns" value="Expressed in decidua and 204 other cell types or tissues"/>
</dbReference>
<dbReference type="GO" id="GO:0005769">
    <property type="term" value="C:early endosome"/>
    <property type="evidence" value="ECO:0007669"/>
    <property type="project" value="UniProtKB-SubCell"/>
</dbReference>
<dbReference type="GO" id="GO:0005768">
    <property type="term" value="C:endosome"/>
    <property type="evidence" value="ECO:0000266"/>
    <property type="project" value="MGI"/>
</dbReference>
<dbReference type="GO" id="GO:1903561">
    <property type="term" value="C:extracellular vesicle"/>
    <property type="evidence" value="ECO:0000314"/>
    <property type="project" value="UniProtKB"/>
</dbReference>
<dbReference type="GO" id="GO:0005886">
    <property type="term" value="C:plasma membrane"/>
    <property type="evidence" value="ECO:0000314"/>
    <property type="project" value="UniProtKB"/>
</dbReference>
<dbReference type="GO" id="GO:1990756">
    <property type="term" value="F:ubiquitin-like ligase-substrate adaptor activity"/>
    <property type="evidence" value="ECO:0000315"/>
    <property type="project" value="UniProtKB"/>
</dbReference>
<dbReference type="GO" id="GO:0140112">
    <property type="term" value="P:extracellular vesicle biogenesis"/>
    <property type="evidence" value="ECO:0000315"/>
    <property type="project" value="UniProtKB"/>
</dbReference>
<dbReference type="GO" id="GO:0032728">
    <property type="term" value="P:positive regulation of interferon-beta production"/>
    <property type="evidence" value="ECO:0007669"/>
    <property type="project" value="Ensembl"/>
</dbReference>
<dbReference type="GO" id="GO:0070534">
    <property type="term" value="P:protein K63-linked ubiquitination"/>
    <property type="evidence" value="ECO:0007669"/>
    <property type="project" value="Ensembl"/>
</dbReference>
<dbReference type="GO" id="GO:0015031">
    <property type="term" value="P:protein transport"/>
    <property type="evidence" value="ECO:0000315"/>
    <property type="project" value="UniProtKB"/>
</dbReference>
<dbReference type="GO" id="GO:0016567">
    <property type="term" value="P:protein ubiquitination"/>
    <property type="evidence" value="ECO:0000315"/>
    <property type="project" value="UniProtKB"/>
</dbReference>
<dbReference type="FunFam" id="2.60.40.640:FF:000005">
    <property type="entry name" value="Arrestin domain-containing protein 3"/>
    <property type="match status" value="1"/>
</dbReference>
<dbReference type="Gene3D" id="2.60.40.640">
    <property type="match status" value="2"/>
</dbReference>
<dbReference type="InterPro" id="IPR014752">
    <property type="entry name" value="Arrestin-like_C"/>
</dbReference>
<dbReference type="InterPro" id="IPR011021">
    <property type="entry name" value="Arrestin-like_N"/>
</dbReference>
<dbReference type="InterPro" id="IPR011022">
    <property type="entry name" value="Arrestin_C-like"/>
</dbReference>
<dbReference type="InterPro" id="IPR050357">
    <property type="entry name" value="Arrestin_domain-protein"/>
</dbReference>
<dbReference type="InterPro" id="IPR014756">
    <property type="entry name" value="Ig_E-set"/>
</dbReference>
<dbReference type="PANTHER" id="PTHR11188">
    <property type="entry name" value="ARRESTIN DOMAIN CONTAINING PROTEIN"/>
    <property type="match status" value="1"/>
</dbReference>
<dbReference type="PANTHER" id="PTHR11188:SF16">
    <property type="entry name" value="ARRESTIN DOMAIN-CONTAINING PROTEIN 4"/>
    <property type="match status" value="1"/>
</dbReference>
<dbReference type="Pfam" id="PF02752">
    <property type="entry name" value="Arrestin_C"/>
    <property type="match status" value="1"/>
</dbReference>
<dbReference type="Pfam" id="PF00339">
    <property type="entry name" value="Arrestin_N"/>
    <property type="match status" value="1"/>
</dbReference>
<dbReference type="SMART" id="SM01017">
    <property type="entry name" value="Arrestin_C"/>
    <property type="match status" value="1"/>
</dbReference>
<dbReference type="SUPFAM" id="SSF81296">
    <property type="entry name" value="E set domains"/>
    <property type="match status" value="2"/>
</dbReference>
<comment type="function">
    <text evidence="1 3">Functions as an adapter recruiting ubiquitin-protein ligases to their specific substrates (PubMed:27462458). Plays a role in endocytosis of activated G protein-coupled receptors (GPCRs) (By similarity). Through an ubiquitination-dependent mechanism also plays a role in the incorporation of SLC11A2 into extracellular vesicles (PubMed:27462458). May play a role in glucose uptake (By similarity). Participates in innate immune response by promoting IFIH1/MDA5 activation through interaction with TRIM65 (By similarity).</text>
</comment>
<comment type="subunit">
    <text evidence="1 3">Interacts with ADRB2. Interacts (via PPxY motifs) with ITCH, NEDD4L and WWP2. Interacts with AVPR2. Identified in a complex containing at least ARRDC4, AVPR2 and HGS (By similarity). Interacts with SLC11A2; controls the incorporation of SLC11A2 into extracellular vesicles through an ubiquitination-dependent mechanism (PubMed:27462458). Interacts with TRIM65 (By similarity).</text>
</comment>
<comment type="subcellular location">
    <subcellularLocation>
        <location evidence="2">Early endosome</location>
    </subcellularLocation>
    <subcellularLocation>
        <location evidence="2 3">Cell membrane</location>
        <topology evidence="4">Peripheral membrane protein</topology>
        <orientation evidence="4">Cytoplasmic side</orientation>
    </subcellularLocation>
    <subcellularLocation>
        <location evidence="2">Cytoplasmic vesicle</location>
    </subcellularLocation>
    <text evidence="3">Also found in extracellular vesicles different from exosomes.</text>
</comment>
<comment type="alternative products">
    <event type="alternative splicing"/>
    <isoform>
        <id>A0A0B4J1F4-1</id>
        <name>1</name>
        <sequence type="displayed"/>
    </isoform>
    <isoform>
        <id>A0A0B4J1F4-2</id>
        <name>2</name>
        <sequence type="described" ref="VSP_058000 VSP_058001"/>
    </isoform>
</comment>
<comment type="induction">
    <text evidence="3">Up-regulated by high iron diet.</text>
</comment>
<comment type="similarity">
    <text evidence="4">Belongs to the arrestin family.</text>
</comment>
<sequence>MGGEAGADGPRGRVKSLGLVFEDESKGCYSSGETVAGHVLLEAAEPVALRGLRLEAQGRATSAWGPSAGARVCIGGGSPAASSEVEYLNLRLSLLEAPAGEGVTLLQPGKHEFPFRFQLPSEPLATSFTGKYGSIQYCVRAVLERPQVPDQSVRRELQVVSHVDVNTPPLLTPMLKTQEKMVGCWLFTSGPVSLSVKIERKGYCNGEAIPIYAEIENCSSRLVVPKAAIFQTQTYLASGKTKTVRHMVANVRGNHIGSGSTDTWNGKMLKIPPVTPSILDCCIIRVDYSLAVYIHIPGAKRLMLELPLVIGTIPYSGFGRRNSSVASQFSMDMCWLALALPEQPEAPPNYADVVSEEEFSRHVPPYPQPSDCDGEACYSMFACIQEFRFQPPPLYSEVDPHPGDAQETQPVSFIL</sequence>
<proteinExistence type="evidence at protein level"/>